<organism>
    <name type="scientific">Siganus guttatus</name>
    <name type="common">Orange-spotted spinefoot</name>
    <name type="synonym">Chaetodon guttatus</name>
    <dbReference type="NCBI Taxonomy" id="92439"/>
    <lineage>
        <taxon>Eukaryota</taxon>
        <taxon>Metazoa</taxon>
        <taxon>Chordata</taxon>
        <taxon>Craniata</taxon>
        <taxon>Vertebrata</taxon>
        <taxon>Euteleostomi</taxon>
        <taxon>Actinopterygii</taxon>
        <taxon>Neopterygii</taxon>
        <taxon>Teleostei</taxon>
        <taxon>Neoteleostei</taxon>
        <taxon>Acanthomorphata</taxon>
        <taxon>Eupercaria</taxon>
        <taxon>Siganidae</taxon>
        <taxon>Siganus</taxon>
    </lineage>
</organism>
<name>SOML_SIGGU</name>
<sequence length="231" mass="26594">MLMFTAIQRGVWVALLWPHLLTASMPLDCREENGNLSRCPTISQEKLLDRVIQHAELIYRVSEESCSLFEEMFVPFPLQLQRNQAGFTCITKALAIPSSKSEIQQISDKWLLHSVLMLVQSWIEPLVYLQNTLDRYDGAPDMLLNKTKWVSEKLISLEQGVVVLIKKMLDEGMATTAYNEQSLFQDDAQPDMLESVMRDYTLLSCFKKDAHKMEILLKLLKCRQNDIYSCA</sequence>
<accession>Q9PWG4</accession>
<keyword id="KW-1015">Disulfide bond</keyword>
<keyword id="KW-0325">Glycoprotein</keyword>
<keyword id="KW-0372">Hormone</keyword>
<keyword id="KW-0964">Secreted</keyword>
<keyword id="KW-0732">Signal</keyword>
<dbReference type="EMBL" id="AB026186">
    <property type="protein sequence ID" value="BAA83467.1"/>
    <property type="molecule type" value="mRNA"/>
</dbReference>
<dbReference type="SMR" id="Q9PWG4"/>
<dbReference type="GO" id="GO:0005615">
    <property type="term" value="C:extracellular space"/>
    <property type="evidence" value="ECO:0007669"/>
    <property type="project" value="TreeGrafter"/>
</dbReference>
<dbReference type="GO" id="GO:0070186">
    <property type="term" value="F:growth hormone activity"/>
    <property type="evidence" value="ECO:0007669"/>
    <property type="project" value="TreeGrafter"/>
</dbReference>
<dbReference type="GO" id="GO:0005131">
    <property type="term" value="F:growth hormone receptor binding"/>
    <property type="evidence" value="ECO:0007669"/>
    <property type="project" value="TreeGrafter"/>
</dbReference>
<dbReference type="GO" id="GO:0048513">
    <property type="term" value="P:animal organ development"/>
    <property type="evidence" value="ECO:0007669"/>
    <property type="project" value="TreeGrafter"/>
</dbReference>
<dbReference type="GO" id="GO:0060396">
    <property type="term" value="P:growth hormone receptor signaling pathway"/>
    <property type="evidence" value="ECO:0007669"/>
    <property type="project" value="TreeGrafter"/>
</dbReference>
<dbReference type="GO" id="GO:0045927">
    <property type="term" value="P:positive regulation of growth"/>
    <property type="evidence" value="ECO:0007669"/>
    <property type="project" value="TreeGrafter"/>
</dbReference>
<dbReference type="GO" id="GO:0046427">
    <property type="term" value="P:positive regulation of receptor signaling pathway via JAK-STAT"/>
    <property type="evidence" value="ECO:0007669"/>
    <property type="project" value="TreeGrafter"/>
</dbReference>
<dbReference type="GO" id="GO:0031667">
    <property type="term" value="P:response to nutrient levels"/>
    <property type="evidence" value="ECO:0007669"/>
    <property type="project" value="TreeGrafter"/>
</dbReference>
<dbReference type="FunFam" id="1.20.1250.10:FF:000042">
    <property type="entry name" value="Somatolactin alpha"/>
    <property type="match status" value="1"/>
</dbReference>
<dbReference type="Gene3D" id="1.20.1250.10">
    <property type="match status" value="1"/>
</dbReference>
<dbReference type="InterPro" id="IPR009079">
    <property type="entry name" value="4_helix_cytokine-like_core"/>
</dbReference>
<dbReference type="InterPro" id="IPR001400">
    <property type="entry name" value="Somatotropin/Prolactin"/>
</dbReference>
<dbReference type="InterPro" id="IPR018116">
    <property type="entry name" value="Somatotropin_CS"/>
</dbReference>
<dbReference type="PANTHER" id="PTHR11417:SF3">
    <property type="entry name" value="SOMATOLACTIN ALPHA ISOFORM X1-RELATED"/>
    <property type="match status" value="1"/>
</dbReference>
<dbReference type="PANTHER" id="PTHR11417">
    <property type="entry name" value="SOMATOTROPIN,PROLACTIN"/>
    <property type="match status" value="1"/>
</dbReference>
<dbReference type="Pfam" id="PF00103">
    <property type="entry name" value="Hormone_1"/>
    <property type="match status" value="1"/>
</dbReference>
<dbReference type="PRINTS" id="PR00836">
    <property type="entry name" value="SOMATOTROPIN"/>
</dbReference>
<dbReference type="SUPFAM" id="SSF47266">
    <property type="entry name" value="4-helical cytokines"/>
    <property type="match status" value="1"/>
</dbReference>
<dbReference type="PROSITE" id="PS00266">
    <property type="entry name" value="SOMATOTROPIN_1"/>
    <property type="match status" value="1"/>
</dbReference>
<dbReference type="PROSITE" id="PS00338">
    <property type="entry name" value="SOMATOTROPIN_2"/>
    <property type="match status" value="1"/>
</dbReference>
<proteinExistence type="evidence at transcript level"/>
<comment type="subcellular location">
    <subcellularLocation>
        <location>Secreted</location>
    </subcellularLocation>
</comment>
<comment type="tissue specificity">
    <text>Pituitary gland.</text>
</comment>
<comment type="similarity">
    <text evidence="3">Belongs to the somatotropin/prolactin family.</text>
</comment>
<evidence type="ECO:0000250" key="1"/>
<evidence type="ECO:0000255" key="2"/>
<evidence type="ECO:0000305" key="3"/>
<protein>
    <recommendedName>
        <fullName>Somatolactin</fullName>
        <shortName>SL</shortName>
    </recommendedName>
</protein>
<feature type="signal peptide" evidence="2">
    <location>
        <begin position="1"/>
        <end position="24"/>
    </location>
</feature>
<feature type="chain" id="PRO_0000033075" description="Somatolactin">
    <location>
        <begin position="25"/>
        <end position="231"/>
    </location>
</feature>
<feature type="glycosylation site" description="N-linked (GlcNAc...) asparagine" evidence="2">
    <location>
        <position position="35"/>
    </location>
</feature>
<feature type="glycosylation site" description="N-linked (GlcNAc...) asparagine" evidence="2">
    <location>
        <position position="145"/>
    </location>
</feature>
<feature type="disulfide bond" evidence="1">
    <location>
        <begin position="29"/>
        <end position="39"/>
    </location>
</feature>
<feature type="disulfide bond" evidence="1">
    <location>
        <begin position="89"/>
        <end position="205"/>
    </location>
</feature>
<feature type="disulfide bond" evidence="1">
    <location>
        <begin position="222"/>
        <end position="230"/>
    </location>
</feature>
<reference key="1">
    <citation type="journal article" date="1999" name="Gen. Comp. Endocrinol.">
        <title>Isolation and cDNA cloning of somatolactin in rabbitfish (Siganus guttatus).</title>
        <authorList>
            <person name="Ayson F.G."/>
            <person name="de Jesus E.G."/>
            <person name="Amemiya Y."/>
            <person name="Moriyama S."/>
            <person name="Hirano T."/>
            <person name="Kawauchi H."/>
        </authorList>
    </citation>
    <scope>NUCLEOTIDE SEQUENCE [MRNA]</scope>
    <source>
        <tissue>Pituitary</tissue>
    </source>
</reference>